<name>ZHX2_RAT</name>
<organism evidence="7">
    <name type="scientific">Rattus norvegicus</name>
    <name type="common">Rat</name>
    <dbReference type="NCBI Taxonomy" id="10116"/>
    <lineage>
        <taxon>Eukaryota</taxon>
        <taxon>Metazoa</taxon>
        <taxon>Chordata</taxon>
        <taxon>Craniata</taxon>
        <taxon>Vertebrata</taxon>
        <taxon>Euteleostomi</taxon>
        <taxon>Mammalia</taxon>
        <taxon>Eutheria</taxon>
        <taxon>Euarchontoglires</taxon>
        <taxon>Glires</taxon>
        <taxon>Rodentia</taxon>
        <taxon>Myomorpha</taxon>
        <taxon>Muroidea</taxon>
        <taxon>Muridae</taxon>
        <taxon>Murinae</taxon>
        <taxon>Rattus</taxon>
    </lineage>
</organism>
<keyword id="KW-0221">Differentiation</keyword>
<keyword id="KW-0238">DNA-binding</keyword>
<keyword id="KW-0371">Homeobox</keyword>
<keyword id="KW-1017">Isopeptide bond</keyword>
<keyword id="KW-0479">Metal-binding</keyword>
<keyword id="KW-0524">Neurogenesis</keyword>
<keyword id="KW-0539">Nucleus</keyword>
<keyword id="KW-0597">Phosphoprotein</keyword>
<keyword id="KW-1185">Reference proteome</keyword>
<keyword id="KW-0677">Repeat</keyword>
<keyword id="KW-0678">Repressor</keyword>
<keyword id="KW-0804">Transcription</keyword>
<keyword id="KW-0805">Transcription regulation</keyword>
<keyword id="KW-0832">Ubl conjugation</keyword>
<keyword id="KW-0862">Zinc</keyword>
<keyword id="KW-0863">Zinc-finger</keyword>
<proteinExistence type="evidence at transcript level"/>
<comment type="function">
    <text evidence="1 2">Acts as a transcriptional repressor. Represses the promoter activity of the CDC25C gene stimulated by NFYA. May play a role in retinal development where it regulates the composition of bipolar cell populations, by promoting differentiation of bipolar OFF-type cells. In the brain, may promote maintenance and suppress differentiation of neural progenitor cells in the developing cortex.</text>
</comment>
<comment type="subunit">
    <text evidence="1 2">Homodimer (via homeobox domain 1). Heterodimer with ZHX1 (via homeobox domain 1). Heterodimer with ZHX3 (via homeobox domain 1). Heterodimerization with ZHX1 is not necessary for repressor activity. Interacts (via homeobox domain) with NFYA (via N-terminus). Interacts with EFNB1 intracellular domain peptide; the interaction enhances ZHX2 transcriptional repression activity.</text>
</comment>
<comment type="subcellular location">
    <subcellularLocation>
        <location evidence="4">Nucleus</location>
    </subcellularLocation>
    <text evidence="1">Colocalizes with EFNB1 intracellular domain in the nucleus.</text>
</comment>
<comment type="similarity">
    <text evidence="6">Belongs to the ZHX family.</text>
</comment>
<accession>Q80VX4</accession>
<accession>G3V6P3</accession>
<evidence type="ECO:0000250" key="1">
    <source>
        <dbReference type="UniProtKB" id="Q8C0C0"/>
    </source>
</evidence>
<evidence type="ECO:0000250" key="2">
    <source>
        <dbReference type="UniProtKB" id="Q9Y6X8"/>
    </source>
</evidence>
<evidence type="ECO:0000255" key="3">
    <source>
        <dbReference type="PROSITE-ProRule" id="PRU00042"/>
    </source>
</evidence>
<evidence type="ECO:0000255" key="4">
    <source>
        <dbReference type="PROSITE-ProRule" id="PRU00108"/>
    </source>
</evidence>
<evidence type="ECO:0000256" key="5">
    <source>
        <dbReference type="SAM" id="MobiDB-lite"/>
    </source>
</evidence>
<evidence type="ECO:0000305" key="6"/>
<evidence type="ECO:0000312" key="7">
    <source>
        <dbReference type="EMBL" id="BAC76614.1"/>
    </source>
</evidence>
<protein>
    <recommendedName>
        <fullName>Zinc fingers and homeoboxes protein 2</fullName>
    </recommendedName>
    <alternativeName>
        <fullName>Alpha-fetoprotein regulator 1</fullName>
        <shortName>AFP regulator 1</shortName>
    </alternativeName>
    <alternativeName>
        <fullName>Regulator of AFP</fullName>
    </alternativeName>
    <alternativeName>
        <fullName>Zinc finger and homeodomain protein 2</fullName>
    </alternativeName>
</protein>
<reference key="1">
    <citation type="journal article" date="2004" name="Nature">
        <title>Genome sequence of the Brown Norway rat yields insights into mammalian evolution.</title>
        <authorList>
            <person name="Gibbs R.A."/>
            <person name="Weinstock G.M."/>
            <person name="Metzker M.L."/>
            <person name="Muzny D.M."/>
            <person name="Sodergren E.J."/>
            <person name="Scherer S."/>
            <person name="Scott G."/>
            <person name="Steffen D."/>
            <person name="Worley K.C."/>
            <person name="Burch P.E."/>
            <person name="Okwuonu G."/>
            <person name="Hines S."/>
            <person name="Lewis L."/>
            <person name="Deramo C."/>
            <person name="Delgado O."/>
            <person name="Dugan-Rocha S."/>
            <person name="Miner G."/>
            <person name="Morgan M."/>
            <person name="Hawes A."/>
            <person name="Gill R."/>
            <person name="Holt R.A."/>
            <person name="Adams M.D."/>
            <person name="Amanatides P.G."/>
            <person name="Baden-Tillson H."/>
            <person name="Barnstead M."/>
            <person name="Chin S."/>
            <person name="Evans C.A."/>
            <person name="Ferriera S."/>
            <person name="Fosler C."/>
            <person name="Glodek A."/>
            <person name="Gu Z."/>
            <person name="Jennings D."/>
            <person name="Kraft C.L."/>
            <person name="Nguyen T."/>
            <person name="Pfannkoch C.M."/>
            <person name="Sitter C."/>
            <person name="Sutton G.G."/>
            <person name="Venter J.C."/>
            <person name="Woodage T."/>
            <person name="Smith D."/>
            <person name="Lee H.-M."/>
            <person name="Gustafson E."/>
            <person name="Cahill P."/>
            <person name="Kana A."/>
            <person name="Doucette-Stamm L."/>
            <person name="Weinstock K."/>
            <person name="Fechtel K."/>
            <person name="Weiss R.B."/>
            <person name="Dunn D.M."/>
            <person name="Green E.D."/>
            <person name="Blakesley R.W."/>
            <person name="Bouffard G.G."/>
            <person name="De Jong P.J."/>
            <person name="Osoegawa K."/>
            <person name="Zhu B."/>
            <person name="Marra M."/>
            <person name="Schein J."/>
            <person name="Bosdet I."/>
            <person name="Fjell C."/>
            <person name="Jones S."/>
            <person name="Krzywinski M."/>
            <person name="Mathewson C."/>
            <person name="Siddiqui A."/>
            <person name="Wye N."/>
            <person name="McPherson J."/>
            <person name="Zhao S."/>
            <person name="Fraser C.M."/>
            <person name="Shetty J."/>
            <person name="Shatsman S."/>
            <person name="Geer K."/>
            <person name="Chen Y."/>
            <person name="Abramzon S."/>
            <person name="Nierman W.C."/>
            <person name="Havlak P.H."/>
            <person name="Chen R."/>
            <person name="Durbin K.J."/>
            <person name="Egan A."/>
            <person name="Ren Y."/>
            <person name="Song X.-Z."/>
            <person name="Li B."/>
            <person name="Liu Y."/>
            <person name="Qin X."/>
            <person name="Cawley S."/>
            <person name="Cooney A.J."/>
            <person name="D'Souza L.M."/>
            <person name="Martin K."/>
            <person name="Wu J.Q."/>
            <person name="Gonzalez-Garay M.L."/>
            <person name="Jackson A.R."/>
            <person name="Kalafus K.J."/>
            <person name="McLeod M.P."/>
            <person name="Milosavljevic A."/>
            <person name="Virk D."/>
            <person name="Volkov A."/>
            <person name="Wheeler D.A."/>
            <person name="Zhang Z."/>
            <person name="Bailey J.A."/>
            <person name="Eichler E.E."/>
            <person name="Tuzun E."/>
            <person name="Birney E."/>
            <person name="Mongin E."/>
            <person name="Ureta-Vidal A."/>
            <person name="Woodwark C."/>
            <person name="Zdobnov E."/>
            <person name="Bork P."/>
            <person name="Suyama M."/>
            <person name="Torrents D."/>
            <person name="Alexandersson M."/>
            <person name="Trask B.J."/>
            <person name="Young J.M."/>
            <person name="Huang H."/>
            <person name="Wang H."/>
            <person name="Xing H."/>
            <person name="Daniels S."/>
            <person name="Gietzen D."/>
            <person name="Schmidt J."/>
            <person name="Stevens K."/>
            <person name="Vitt U."/>
            <person name="Wingrove J."/>
            <person name="Camara F."/>
            <person name="Mar Alba M."/>
            <person name="Abril J.F."/>
            <person name="Guigo R."/>
            <person name="Smit A."/>
            <person name="Dubchak I."/>
            <person name="Rubin E.M."/>
            <person name="Couronne O."/>
            <person name="Poliakov A."/>
            <person name="Huebner N."/>
            <person name="Ganten D."/>
            <person name="Goesele C."/>
            <person name="Hummel O."/>
            <person name="Kreitler T."/>
            <person name="Lee Y.-A."/>
            <person name="Monti J."/>
            <person name="Schulz H."/>
            <person name="Zimdahl H."/>
            <person name="Himmelbauer H."/>
            <person name="Lehrach H."/>
            <person name="Jacob H.J."/>
            <person name="Bromberg S."/>
            <person name="Gullings-Handley J."/>
            <person name="Jensen-Seaman M.I."/>
            <person name="Kwitek A.E."/>
            <person name="Lazar J."/>
            <person name="Pasko D."/>
            <person name="Tonellato P.J."/>
            <person name="Twigger S."/>
            <person name="Ponting C.P."/>
            <person name="Duarte J.M."/>
            <person name="Rice S."/>
            <person name="Goodstadt L."/>
            <person name="Beatson S.A."/>
            <person name="Emes R.D."/>
            <person name="Winter E.E."/>
            <person name="Webber C."/>
            <person name="Brandt P."/>
            <person name="Nyakatura G."/>
            <person name="Adetobi M."/>
            <person name="Chiaromonte F."/>
            <person name="Elnitski L."/>
            <person name="Eswara P."/>
            <person name="Hardison R.C."/>
            <person name="Hou M."/>
            <person name="Kolbe D."/>
            <person name="Makova K."/>
            <person name="Miller W."/>
            <person name="Nekrutenko A."/>
            <person name="Riemer C."/>
            <person name="Schwartz S."/>
            <person name="Taylor J."/>
            <person name="Yang S."/>
            <person name="Zhang Y."/>
            <person name="Lindpaintner K."/>
            <person name="Andrews T.D."/>
            <person name="Caccamo M."/>
            <person name="Clamp M."/>
            <person name="Clarke L."/>
            <person name="Curwen V."/>
            <person name="Durbin R.M."/>
            <person name="Eyras E."/>
            <person name="Searle S.M."/>
            <person name="Cooper G.M."/>
            <person name="Batzoglou S."/>
            <person name="Brudno M."/>
            <person name="Sidow A."/>
            <person name="Stone E.A."/>
            <person name="Payseur B.A."/>
            <person name="Bourque G."/>
            <person name="Lopez-Otin C."/>
            <person name="Puente X.S."/>
            <person name="Chakrabarti K."/>
            <person name="Chatterji S."/>
            <person name="Dewey C."/>
            <person name="Pachter L."/>
            <person name="Bray N."/>
            <person name="Yap V.B."/>
            <person name="Caspi A."/>
            <person name="Tesler G."/>
            <person name="Pevzner P.A."/>
            <person name="Haussler D."/>
            <person name="Roskin K.M."/>
            <person name="Baertsch R."/>
            <person name="Clawson H."/>
            <person name="Furey T.S."/>
            <person name="Hinrichs A.S."/>
            <person name="Karolchik D."/>
            <person name="Kent W.J."/>
            <person name="Rosenbloom K.R."/>
            <person name="Trumbower H."/>
            <person name="Weirauch M."/>
            <person name="Cooper D.N."/>
            <person name="Stenson P.D."/>
            <person name="Ma B."/>
            <person name="Brent M."/>
            <person name="Arumugam M."/>
            <person name="Shteynberg D."/>
            <person name="Copley R.R."/>
            <person name="Taylor M.S."/>
            <person name="Riethman H."/>
            <person name="Mudunuri U."/>
            <person name="Peterson J."/>
            <person name="Guyer M."/>
            <person name="Felsenfeld A."/>
            <person name="Old S."/>
            <person name="Mockrin S."/>
            <person name="Collins F.S."/>
        </authorList>
    </citation>
    <scope>NUCLEOTIDE SEQUENCE [LARGE SCALE GENOMIC DNA]</scope>
    <source>
        <strain>Brown Norway</strain>
    </source>
</reference>
<reference key="2">
    <citation type="submission" date="2005-09" db="EMBL/GenBank/DDBJ databases">
        <authorList>
            <person name="Mural R.J."/>
            <person name="Adams M.D."/>
            <person name="Myers E.W."/>
            <person name="Smith H.O."/>
            <person name="Venter J.C."/>
        </authorList>
    </citation>
    <scope>NUCLEOTIDE SEQUENCE [LARGE SCALE GENOMIC DNA]</scope>
    <source>
        <strain>Brown Norway</strain>
    </source>
</reference>
<reference evidence="6" key="3">
    <citation type="journal article" date="2003" name="Biochem. J.">
        <title>Zinc-fingers and homeoboxes (ZHX) 2, a novel member of the ZHX family, functions as a transcriptional repressor.</title>
        <authorList>
            <person name="Kawata H."/>
            <person name="Yamada K."/>
            <person name="Shou Z."/>
            <person name="Mizutani T."/>
            <person name="Yazawa T."/>
            <person name="Yoshino M."/>
            <person name="Sekiguchi T."/>
            <person name="Kajitani T."/>
            <person name="Miyamoto K."/>
        </authorList>
    </citation>
    <scope>NUCLEOTIDE SEQUENCE [MRNA] OF 195-358</scope>
    <source>
        <strain evidence="7">Sprague-Dawley</strain>
        <tissue evidence="7">Liver</tissue>
    </source>
</reference>
<feature type="chain" id="PRO_0000049394" description="Zinc fingers and homeoboxes protein 2">
    <location>
        <begin position="1"/>
        <end position="836"/>
    </location>
</feature>
<feature type="zinc finger region" description="C2H2-type 1" evidence="3">
    <location>
        <begin position="78"/>
        <end position="101"/>
    </location>
</feature>
<feature type="zinc finger region" description="C2H2-type 2" evidence="3">
    <location>
        <begin position="110"/>
        <end position="133"/>
    </location>
</feature>
<feature type="DNA-binding region" description="Homeobox 1" evidence="4">
    <location>
        <begin position="263"/>
        <end position="324"/>
    </location>
</feature>
<feature type="DNA-binding region" description="Homeobox 2" evidence="4">
    <location>
        <begin position="439"/>
        <end position="501"/>
    </location>
</feature>
<feature type="DNA-binding region" description="Homeobox 3" evidence="4">
    <location>
        <begin position="530"/>
        <end position="591"/>
    </location>
</feature>
<feature type="DNA-binding region" description="Homeobox 4" evidence="4">
    <location>
        <begin position="628"/>
        <end position="690"/>
    </location>
</feature>
<feature type="region of interest" description="Disordered" evidence="5">
    <location>
        <begin position="24"/>
        <end position="58"/>
    </location>
</feature>
<feature type="region of interest" description="Interaction with EFNB1" evidence="1">
    <location>
        <begin position="27"/>
        <end position="77"/>
    </location>
</feature>
<feature type="region of interest" description="Disordered" evidence="5">
    <location>
        <begin position="168"/>
        <end position="210"/>
    </location>
</feature>
<feature type="region of interest" description="Required for homodimerization" evidence="2">
    <location>
        <begin position="195"/>
        <end position="358"/>
    </location>
</feature>
<feature type="region of interest" description="Required for interaction with NFYA" evidence="2">
    <location>
        <begin position="263"/>
        <end position="497"/>
    </location>
</feature>
<feature type="region of interest" description="Required for repressor activity" evidence="2">
    <location>
        <begin position="263"/>
        <end position="446"/>
    </location>
</feature>
<feature type="region of interest" description="Required for nuclear localization" evidence="2">
    <location>
        <begin position="317"/>
        <end position="446"/>
    </location>
</feature>
<feature type="region of interest" description="Disordered" evidence="5">
    <location>
        <begin position="404"/>
        <end position="442"/>
    </location>
</feature>
<feature type="region of interest" description="Disordered" evidence="5">
    <location>
        <begin position="700"/>
        <end position="836"/>
    </location>
</feature>
<feature type="compositionally biased region" description="Basic and acidic residues" evidence="5">
    <location>
        <begin position="42"/>
        <end position="58"/>
    </location>
</feature>
<feature type="compositionally biased region" description="Basic and acidic residues" evidence="5">
    <location>
        <begin position="192"/>
        <end position="210"/>
    </location>
</feature>
<feature type="compositionally biased region" description="Basic and acidic residues" evidence="5">
    <location>
        <begin position="700"/>
        <end position="709"/>
    </location>
</feature>
<feature type="compositionally biased region" description="Basic and acidic residues" evidence="5">
    <location>
        <begin position="730"/>
        <end position="746"/>
    </location>
</feature>
<feature type="modified residue" description="Phosphoserine" evidence="1">
    <location>
        <position position="824"/>
    </location>
</feature>
<feature type="modified residue" description="Phosphoserine" evidence="1">
    <location>
        <position position="826"/>
    </location>
</feature>
<feature type="cross-link" description="Glycyl lysine isopeptide (Lys-Gly) (interchain with G-Cter in SUMO2)" evidence="2">
    <location>
        <position position="455"/>
    </location>
</feature>
<gene>
    <name type="primary">Zhx2</name>
    <name type="synonym">Afr1</name>
    <name type="synonym">Raf</name>
</gene>
<dbReference type="EMBL" id="AABR07058000">
    <property type="status" value="NOT_ANNOTATED_CDS"/>
    <property type="molecule type" value="Genomic_DNA"/>
</dbReference>
<dbReference type="EMBL" id="CH473950">
    <property type="protein sequence ID" value="EDM16240.1"/>
    <property type="molecule type" value="Genomic_DNA"/>
</dbReference>
<dbReference type="EMBL" id="AB081946">
    <property type="protein sequence ID" value="BAC76614.1"/>
    <property type="molecule type" value="mRNA"/>
</dbReference>
<dbReference type="RefSeq" id="NP_001257985.1">
    <property type="nucleotide sequence ID" value="NM_001271056.1"/>
</dbReference>
<dbReference type="RefSeq" id="XP_006241716.1">
    <property type="nucleotide sequence ID" value="XM_006241654.5"/>
</dbReference>
<dbReference type="RefSeq" id="XP_017450346.1">
    <property type="nucleotide sequence ID" value="XM_017594857.3"/>
</dbReference>
<dbReference type="RefSeq" id="XP_063119628.1">
    <property type="nucleotide sequence ID" value="XM_063263558.1"/>
</dbReference>
<dbReference type="SMR" id="Q80VX4"/>
<dbReference type="FunCoup" id="Q80VX4">
    <property type="interactions" value="653"/>
</dbReference>
<dbReference type="IntAct" id="Q80VX4">
    <property type="interactions" value="2"/>
</dbReference>
<dbReference type="STRING" id="10116.ENSRNOP00000007326"/>
<dbReference type="iPTMnet" id="Q80VX4"/>
<dbReference type="PhosphoSitePlus" id="Q80VX4"/>
<dbReference type="PaxDb" id="10116-ENSRNOP00000007326"/>
<dbReference type="PeptideAtlas" id="Q80VX4"/>
<dbReference type="Ensembl" id="ENSRNOT00000007326.6">
    <property type="protein sequence ID" value="ENSRNOP00000007326.4"/>
    <property type="gene ID" value="ENSRNOG00000005417.6"/>
</dbReference>
<dbReference type="Ensembl" id="ENSRNOT00000095346.1">
    <property type="protein sequence ID" value="ENSRNOP00000077300.1"/>
    <property type="gene ID" value="ENSRNOG00000005417.6"/>
</dbReference>
<dbReference type="Ensembl" id="ENSRNOT00000099915.1">
    <property type="protein sequence ID" value="ENSRNOP00000095233.1"/>
    <property type="gene ID" value="ENSRNOG00000005417.6"/>
</dbReference>
<dbReference type="Ensembl" id="ENSRNOT00000107215.1">
    <property type="protein sequence ID" value="ENSRNOP00000092484.1"/>
    <property type="gene ID" value="ENSRNOG00000005417.6"/>
</dbReference>
<dbReference type="GeneID" id="314988"/>
<dbReference type="KEGG" id="rno:314988"/>
<dbReference type="UCSC" id="RGD:727926">
    <property type="organism name" value="rat"/>
</dbReference>
<dbReference type="AGR" id="RGD:727926"/>
<dbReference type="CTD" id="22882"/>
<dbReference type="RGD" id="727926">
    <property type="gene designation" value="Zhx2"/>
</dbReference>
<dbReference type="eggNOG" id="ENOG502RHIC">
    <property type="taxonomic scope" value="Eukaryota"/>
</dbReference>
<dbReference type="GeneTree" id="ENSGT00950000182893"/>
<dbReference type="HOGENOM" id="CLU_009147_1_0_1"/>
<dbReference type="InParanoid" id="Q80VX4"/>
<dbReference type="OMA" id="ENHMEGT"/>
<dbReference type="OrthoDB" id="6159439at2759"/>
<dbReference type="TreeFam" id="TF333363"/>
<dbReference type="PRO" id="PR:Q80VX4"/>
<dbReference type="Proteomes" id="UP000002494">
    <property type="component" value="Chromosome 7"/>
</dbReference>
<dbReference type="Proteomes" id="UP000234681">
    <property type="component" value="Chromosome 7"/>
</dbReference>
<dbReference type="Bgee" id="ENSRNOG00000005417">
    <property type="expression patterns" value="Expressed in skeletal muscle tissue and 19 other cell types or tissues"/>
</dbReference>
<dbReference type="GO" id="GO:0005634">
    <property type="term" value="C:nucleus"/>
    <property type="evidence" value="ECO:0000250"/>
    <property type="project" value="UniProtKB"/>
</dbReference>
<dbReference type="GO" id="GO:0003677">
    <property type="term" value="F:DNA binding"/>
    <property type="evidence" value="ECO:0007669"/>
    <property type="project" value="UniProtKB-KW"/>
</dbReference>
<dbReference type="GO" id="GO:0000981">
    <property type="term" value="F:DNA-binding transcription factor activity, RNA polymerase II-specific"/>
    <property type="evidence" value="ECO:0000318"/>
    <property type="project" value="GO_Central"/>
</dbReference>
<dbReference type="GO" id="GO:0042802">
    <property type="term" value="F:identical protein binding"/>
    <property type="evidence" value="ECO:0000266"/>
    <property type="project" value="RGD"/>
</dbReference>
<dbReference type="GO" id="GO:0046982">
    <property type="term" value="F:protein heterodimerization activity"/>
    <property type="evidence" value="ECO:0000250"/>
    <property type="project" value="UniProtKB"/>
</dbReference>
<dbReference type="GO" id="GO:0042803">
    <property type="term" value="F:protein homodimerization activity"/>
    <property type="evidence" value="ECO:0000250"/>
    <property type="project" value="UniProtKB"/>
</dbReference>
<dbReference type="GO" id="GO:0008270">
    <property type="term" value="F:zinc ion binding"/>
    <property type="evidence" value="ECO:0007669"/>
    <property type="project" value="UniProtKB-KW"/>
</dbReference>
<dbReference type="GO" id="GO:0006402">
    <property type="term" value="P:mRNA catabolic process"/>
    <property type="evidence" value="ECO:0000266"/>
    <property type="project" value="RGD"/>
</dbReference>
<dbReference type="GO" id="GO:0045892">
    <property type="term" value="P:negative regulation of DNA-templated transcription"/>
    <property type="evidence" value="ECO:0000250"/>
    <property type="project" value="UniProtKB"/>
</dbReference>
<dbReference type="GO" id="GO:0045665">
    <property type="term" value="P:negative regulation of neuron differentiation"/>
    <property type="evidence" value="ECO:0000266"/>
    <property type="project" value="RGD"/>
</dbReference>
<dbReference type="GO" id="GO:0000122">
    <property type="term" value="P:negative regulation of transcription by RNA polymerase II"/>
    <property type="evidence" value="ECO:0000250"/>
    <property type="project" value="UniProtKB"/>
</dbReference>
<dbReference type="GO" id="GO:0030182">
    <property type="term" value="P:neuron differentiation"/>
    <property type="evidence" value="ECO:0000266"/>
    <property type="project" value="RGD"/>
</dbReference>
<dbReference type="GO" id="GO:0006357">
    <property type="term" value="P:regulation of transcription by RNA polymerase II"/>
    <property type="evidence" value="ECO:0000266"/>
    <property type="project" value="RGD"/>
</dbReference>
<dbReference type="GO" id="GO:0060040">
    <property type="term" value="P:retinal bipolar neuron differentiation"/>
    <property type="evidence" value="ECO:0000266"/>
    <property type="project" value="RGD"/>
</dbReference>
<dbReference type="GO" id="GO:0035019">
    <property type="term" value="P:somatic stem cell population maintenance"/>
    <property type="evidence" value="ECO:0000266"/>
    <property type="project" value="RGD"/>
</dbReference>
<dbReference type="CDD" id="cd00086">
    <property type="entry name" value="homeodomain"/>
    <property type="match status" value="4"/>
</dbReference>
<dbReference type="FunFam" id="3.30.160.60:FF:000296">
    <property type="entry name" value="Zinc fingers and homeoboxes protein 1"/>
    <property type="match status" value="1"/>
</dbReference>
<dbReference type="FunFam" id="1.10.10.60:FF:000247">
    <property type="entry name" value="Zinc fingers and homeoboxes protein 2"/>
    <property type="match status" value="1"/>
</dbReference>
<dbReference type="FunFam" id="1.10.10.60:FF:000264">
    <property type="entry name" value="zinc fingers and homeoboxes protein 2"/>
    <property type="match status" value="1"/>
</dbReference>
<dbReference type="FunFam" id="1.10.10.60:FF:000272">
    <property type="entry name" value="zinc fingers and homeoboxes protein 2"/>
    <property type="match status" value="1"/>
</dbReference>
<dbReference type="FunFam" id="1.10.10.60:FF:000062">
    <property type="entry name" value="zinc fingers and homeoboxes protein 3"/>
    <property type="match status" value="1"/>
</dbReference>
<dbReference type="Gene3D" id="3.30.160.60">
    <property type="entry name" value="Classic Zinc Finger"/>
    <property type="match status" value="1"/>
</dbReference>
<dbReference type="Gene3D" id="1.10.10.60">
    <property type="entry name" value="Homeodomain-like"/>
    <property type="match status" value="4"/>
</dbReference>
<dbReference type="InterPro" id="IPR001356">
    <property type="entry name" value="HD"/>
</dbReference>
<dbReference type="InterPro" id="IPR009057">
    <property type="entry name" value="Homeodomain-like_sf"/>
</dbReference>
<dbReference type="InterPro" id="IPR041057">
    <property type="entry name" value="ZHX_Znf_C2H2"/>
</dbReference>
<dbReference type="InterPro" id="IPR036236">
    <property type="entry name" value="Znf_C2H2_sf"/>
</dbReference>
<dbReference type="InterPro" id="IPR013087">
    <property type="entry name" value="Znf_C2H2_type"/>
</dbReference>
<dbReference type="PANTHER" id="PTHR15467:SF5">
    <property type="entry name" value="ZINC FINGERS AND HOMEOBOXES PROTEIN 2"/>
    <property type="match status" value="1"/>
</dbReference>
<dbReference type="PANTHER" id="PTHR15467">
    <property type="entry name" value="ZINC-FINGERS AND HOMEOBOXES RELATED"/>
    <property type="match status" value="1"/>
</dbReference>
<dbReference type="Pfam" id="PF00046">
    <property type="entry name" value="Homeodomain"/>
    <property type="match status" value="3"/>
</dbReference>
<dbReference type="Pfam" id="PF18387">
    <property type="entry name" value="zf_C2H2_ZHX"/>
    <property type="match status" value="1"/>
</dbReference>
<dbReference type="SMART" id="SM00389">
    <property type="entry name" value="HOX"/>
    <property type="match status" value="4"/>
</dbReference>
<dbReference type="SMART" id="SM00355">
    <property type="entry name" value="ZnF_C2H2"/>
    <property type="match status" value="2"/>
</dbReference>
<dbReference type="SUPFAM" id="SSF57667">
    <property type="entry name" value="beta-beta-alpha zinc fingers"/>
    <property type="match status" value="2"/>
</dbReference>
<dbReference type="SUPFAM" id="SSF46689">
    <property type="entry name" value="Homeodomain-like"/>
    <property type="match status" value="4"/>
</dbReference>
<dbReference type="PROSITE" id="PS50071">
    <property type="entry name" value="HOMEOBOX_2"/>
    <property type="match status" value="3"/>
</dbReference>
<dbReference type="PROSITE" id="PS50157">
    <property type="entry name" value="ZINC_FINGER_C2H2_2"/>
    <property type="match status" value="1"/>
</dbReference>
<sequence length="836" mass="92107">MASKRKSTTPCMVRTSQVVEQDVLEEADRAKDKGLGVPPSDVSKERWAAEPEPSSKESEVVEVRSVGESQSKKLQGGYECKYCPYSTQNLNEFTEHVDMQHPNVILNPLYVCAECNFTTKKYDSLSDHNSKFHPGETNFKLKLIKRNNQTVLEQSIEATNHVVSITASAPGSSDNDPGVSVGKTATVKTGKQKADAKKVPKKPDEAAPDNHMEGTARLVTDTAEILSRLGSVELLHDSLGHVMPSVQLPPNINLVPKVPVPLNTTKYNSALDTNATMINSFNKFPYPTQAELSWLTAASKHPEEHIRIWFATQRLKHGISWSPEEVEEARKKMFNGTIQSVPPTITVLPAQLTPTKVSQPILQTALPCQILGQPSLVLTQVTSGSTAVSCSPITLAVAGVTNHGQKRPLVTPQAAPEPKRPHIAQVPEPPPKVANTPLTPASDRKKTKLQIAHLKASFLQSQFPDDAEVYRLIEVTGLARSEIKKWFSDHRYRCQRGIVHITSESLAKDQMAITGTRHGRTYHVYPDFAAQKFKEKSQGQLKTLEDSFLKSSFPTQAEVERLRVETKLSRREIDSWFSERRKLRDSMEQAVLDSMGSGKKGSDVVAPNGALSRLDQLSGAQLAGPLPSPSSAVVQNQEQVHLLRSTFARTQWPTPQEYDQLAAKTGLVRTEIVRWFKENRCLLKTGTLSWLEQYQRHHLSDDHGHDVASRRATKHVAESPKNGSEVAHQYAKDPKALGEEESEKLVPRVKLVGDPSKDCLAGKPSEATSDRSEGSRDGQGSEENEESGIVDFVEVTVGEEDAISEKWGSWSQRVAEGTVERADSDSDSTPAEAGQA</sequence>